<proteinExistence type="inferred from homology"/>
<evidence type="ECO:0000255" key="1">
    <source>
        <dbReference type="HAMAP-Rule" id="MF_01351"/>
    </source>
</evidence>
<feature type="chain" id="PRO_0000298585" description="NAD(P)H-quinone oxidoreductase subunit I, chloroplastic">
    <location>
        <begin position="1"/>
        <end position="180"/>
    </location>
</feature>
<feature type="domain" description="4Fe-4S ferredoxin-type 1" evidence="1">
    <location>
        <begin position="55"/>
        <end position="84"/>
    </location>
</feature>
<feature type="domain" description="4Fe-4S ferredoxin-type 2" evidence="1">
    <location>
        <begin position="95"/>
        <end position="124"/>
    </location>
</feature>
<feature type="binding site" evidence="1">
    <location>
        <position position="64"/>
    </location>
    <ligand>
        <name>[4Fe-4S] cluster</name>
        <dbReference type="ChEBI" id="CHEBI:49883"/>
        <label>1</label>
    </ligand>
</feature>
<feature type="binding site" evidence="1">
    <location>
        <position position="67"/>
    </location>
    <ligand>
        <name>[4Fe-4S] cluster</name>
        <dbReference type="ChEBI" id="CHEBI:49883"/>
        <label>1</label>
    </ligand>
</feature>
<feature type="binding site" evidence="1">
    <location>
        <position position="70"/>
    </location>
    <ligand>
        <name>[4Fe-4S] cluster</name>
        <dbReference type="ChEBI" id="CHEBI:49883"/>
        <label>1</label>
    </ligand>
</feature>
<feature type="binding site" evidence="1">
    <location>
        <position position="74"/>
    </location>
    <ligand>
        <name>[4Fe-4S] cluster</name>
        <dbReference type="ChEBI" id="CHEBI:49883"/>
        <label>2</label>
    </ligand>
</feature>
<feature type="binding site" evidence="1">
    <location>
        <position position="104"/>
    </location>
    <ligand>
        <name>[4Fe-4S] cluster</name>
        <dbReference type="ChEBI" id="CHEBI:49883"/>
        <label>2</label>
    </ligand>
</feature>
<feature type="binding site" evidence="1">
    <location>
        <position position="107"/>
    </location>
    <ligand>
        <name>[4Fe-4S] cluster</name>
        <dbReference type="ChEBI" id="CHEBI:49883"/>
        <label>2</label>
    </ligand>
</feature>
<feature type="binding site" evidence="1">
    <location>
        <position position="110"/>
    </location>
    <ligand>
        <name>[4Fe-4S] cluster</name>
        <dbReference type="ChEBI" id="CHEBI:49883"/>
        <label>2</label>
    </ligand>
</feature>
<feature type="binding site" evidence="1">
    <location>
        <position position="114"/>
    </location>
    <ligand>
        <name>[4Fe-4S] cluster</name>
        <dbReference type="ChEBI" id="CHEBI:49883"/>
        <label>1</label>
    </ligand>
</feature>
<name>NDHI_PLAOC</name>
<sequence length="180" mass="20833">MLPMVTGFMNYGQQTVRAARYIGQSFMITLSHANRLPVTIQYPYEKLITSERFRGRIHFEFDKCIACEVCVRVCPIDLPVVNWRLETDIRKKRLLNYSIDFGICIFCGNCVEYCPTNCLSMTEEYELSTYDRHELNYNQIALGRLPISVIGDYTIRTIMNSTQIKIATGKPLDSKTITNY</sequence>
<gene>
    <name evidence="1" type="primary">ndhI</name>
</gene>
<protein>
    <recommendedName>
        <fullName evidence="1">NAD(P)H-quinone oxidoreductase subunit I, chloroplastic</fullName>
        <ecNumber evidence="1">7.1.1.-</ecNumber>
    </recommendedName>
    <alternativeName>
        <fullName evidence="1">NAD(P)H dehydrogenase subunit I</fullName>
        <shortName evidence="1">NDH subunit I</shortName>
    </alternativeName>
    <alternativeName>
        <fullName evidence="1">NADH-plastoquinone oxidoreductase subunit I</fullName>
    </alternativeName>
</protein>
<comment type="function">
    <text evidence="1">NDH shuttles electrons from NAD(P)H:plastoquinone, via FMN and iron-sulfur (Fe-S) centers, to quinones in the photosynthetic chain and possibly in a chloroplast respiratory chain. The immediate electron acceptor for the enzyme in this species is believed to be plastoquinone. Couples the redox reaction to proton translocation, and thus conserves the redox energy in a proton gradient.</text>
</comment>
<comment type="catalytic activity">
    <reaction evidence="1">
        <text>a plastoquinone + NADH + (n+1) H(+)(in) = a plastoquinol + NAD(+) + n H(+)(out)</text>
        <dbReference type="Rhea" id="RHEA:42608"/>
        <dbReference type="Rhea" id="RHEA-COMP:9561"/>
        <dbReference type="Rhea" id="RHEA-COMP:9562"/>
        <dbReference type="ChEBI" id="CHEBI:15378"/>
        <dbReference type="ChEBI" id="CHEBI:17757"/>
        <dbReference type="ChEBI" id="CHEBI:57540"/>
        <dbReference type="ChEBI" id="CHEBI:57945"/>
        <dbReference type="ChEBI" id="CHEBI:62192"/>
    </reaction>
</comment>
<comment type="catalytic activity">
    <reaction evidence="1">
        <text>a plastoquinone + NADPH + (n+1) H(+)(in) = a plastoquinol + NADP(+) + n H(+)(out)</text>
        <dbReference type="Rhea" id="RHEA:42612"/>
        <dbReference type="Rhea" id="RHEA-COMP:9561"/>
        <dbReference type="Rhea" id="RHEA-COMP:9562"/>
        <dbReference type="ChEBI" id="CHEBI:15378"/>
        <dbReference type="ChEBI" id="CHEBI:17757"/>
        <dbReference type="ChEBI" id="CHEBI:57783"/>
        <dbReference type="ChEBI" id="CHEBI:58349"/>
        <dbReference type="ChEBI" id="CHEBI:62192"/>
    </reaction>
</comment>
<comment type="cofactor">
    <cofactor evidence="1">
        <name>[4Fe-4S] cluster</name>
        <dbReference type="ChEBI" id="CHEBI:49883"/>
    </cofactor>
    <text evidence="1">Binds 2 [4Fe-4S] clusters per subunit.</text>
</comment>
<comment type="subunit">
    <text evidence="1">NDH is composed of at least 16 different subunits, 5 of which are encoded in the nucleus.</text>
</comment>
<comment type="subcellular location">
    <subcellularLocation>
        <location evidence="1">Plastid</location>
        <location evidence="1">Chloroplast thylakoid membrane</location>
        <topology evidence="1">Peripheral membrane protein</topology>
    </subcellularLocation>
</comment>
<comment type="similarity">
    <text evidence="1">Belongs to the complex I 23 kDa subunit family.</text>
</comment>
<dbReference type="EC" id="7.1.1.-" evidence="1"/>
<dbReference type="EMBL" id="DQ923116">
    <property type="protein sequence ID" value="ABI49833.1"/>
    <property type="molecule type" value="Genomic_DNA"/>
</dbReference>
<dbReference type="RefSeq" id="YP_740619.1">
    <property type="nucleotide sequence ID" value="NC_008335.1"/>
</dbReference>
<dbReference type="SMR" id="Q09FZ2"/>
<dbReference type="GeneID" id="4271358"/>
<dbReference type="GO" id="GO:0009535">
    <property type="term" value="C:chloroplast thylakoid membrane"/>
    <property type="evidence" value="ECO:0007669"/>
    <property type="project" value="UniProtKB-SubCell"/>
</dbReference>
<dbReference type="GO" id="GO:0051539">
    <property type="term" value="F:4 iron, 4 sulfur cluster binding"/>
    <property type="evidence" value="ECO:0007669"/>
    <property type="project" value="UniProtKB-KW"/>
</dbReference>
<dbReference type="GO" id="GO:0005506">
    <property type="term" value="F:iron ion binding"/>
    <property type="evidence" value="ECO:0007669"/>
    <property type="project" value="UniProtKB-UniRule"/>
</dbReference>
<dbReference type="GO" id="GO:0008137">
    <property type="term" value="F:NADH dehydrogenase (ubiquinone) activity"/>
    <property type="evidence" value="ECO:0007669"/>
    <property type="project" value="InterPro"/>
</dbReference>
<dbReference type="GO" id="GO:0048038">
    <property type="term" value="F:quinone binding"/>
    <property type="evidence" value="ECO:0007669"/>
    <property type="project" value="UniProtKB-KW"/>
</dbReference>
<dbReference type="GO" id="GO:0019684">
    <property type="term" value="P:photosynthesis, light reaction"/>
    <property type="evidence" value="ECO:0007669"/>
    <property type="project" value="UniProtKB-UniRule"/>
</dbReference>
<dbReference type="FunFam" id="3.30.70.3270:FF:000006">
    <property type="entry name" value="NAD(P)H-quinone oxidoreductase subunit I, chloroplastic"/>
    <property type="match status" value="1"/>
</dbReference>
<dbReference type="Gene3D" id="3.30.70.3270">
    <property type="match status" value="1"/>
</dbReference>
<dbReference type="HAMAP" id="MF_01351">
    <property type="entry name" value="NDH1_NuoI"/>
    <property type="match status" value="1"/>
</dbReference>
<dbReference type="InterPro" id="IPR017896">
    <property type="entry name" value="4Fe4S_Fe-S-bd"/>
</dbReference>
<dbReference type="InterPro" id="IPR017900">
    <property type="entry name" value="4Fe4S_Fe_S_CS"/>
</dbReference>
<dbReference type="InterPro" id="IPR010226">
    <property type="entry name" value="NADH_quinone_OxRdtase_chainI"/>
</dbReference>
<dbReference type="InterPro" id="IPR004497">
    <property type="entry name" value="NDHI"/>
</dbReference>
<dbReference type="NCBIfam" id="TIGR00403">
    <property type="entry name" value="ndhI"/>
    <property type="match status" value="1"/>
</dbReference>
<dbReference type="NCBIfam" id="TIGR01971">
    <property type="entry name" value="NuoI"/>
    <property type="match status" value="1"/>
</dbReference>
<dbReference type="NCBIfam" id="NF004537">
    <property type="entry name" value="PRK05888.1-3"/>
    <property type="match status" value="1"/>
</dbReference>
<dbReference type="PANTHER" id="PTHR47275">
    <property type="entry name" value="NAD(P)H-QUINONE OXIDOREDUCTASE SUBUNIT I, CHLOROPLASTIC"/>
    <property type="match status" value="1"/>
</dbReference>
<dbReference type="PANTHER" id="PTHR47275:SF1">
    <property type="entry name" value="NAD(P)H-QUINONE OXIDOREDUCTASE SUBUNIT I, CHLOROPLASTIC"/>
    <property type="match status" value="1"/>
</dbReference>
<dbReference type="Pfam" id="PF00037">
    <property type="entry name" value="Fer4"/>
    <property type="match status" value="2"/>
</dbReference>
<dbReference type="SUPFAM" id="SSF54862">
    <property type="entry name" value="4Fe-4S ferredoxins"/>
    <property type="match status" value="1"/>
</dbReference>
<dbReference type="PROSITE" id="PS00198">
    <property type="entry name" value="4FE4S_FER_1"/>
    <property type="match status" value="2"/>
</dbReference>
<dbReference type="PROSITE" id="PS51379">
    <property type="entry name" value="4FE4S_FER_2"/>
    <property type="match status" value="2"/>
</dbReference>
<geneLocation type="chloroplast"/>
<organism>
    <name type="scientific">Platanus occidentalis</name>
    <name type="common">Sycamore</name>
    <name type="synonym">American plane tree</name>
    <dbReference type="NCBI Taxonomy" id="4403"/>
    <lineage>
        <taxon>Eukaryota</taxon>
        <taxon>Viridiplantae</taxon>
        <taxon>Streptophyta</taxon>
        <taxon>Embryophyta</taxon>
        <taxon>Tracheophyta</taxon>
        <taxon>Spermatophyta</taxon>
        <taxon>Magnoliopsida</taxon>
        <taxon>Proteales</taxon>
        <taxon>Platanaceae</taxon>
        <taxon>Platanus</taxon>
    </lineage>
</organism>
<accession>Q09FZ2</accession>
<keyword id="KW-0004">4Fe-4S</keyword>
<keyword id="KW-0150">Chloroplast</keyword>
<keyword id="KW-0408">Iron</keyword>
<keyword id="KW-0411">Iron-sulfur</keyword>
<keyword id="KW-0472">Membrane</keyword>
<keyword id="KW-0479">Metal-binding</keyword>
<keyword id="KW-0520">NAD</keyword>
<keyword id="KW-0521">NADP</keyword>
<keyword id="KW-0934">Plastid</keyword>
<keyword id="KW-0618">Plastoquinone</keyword>
<keyword id="KW-0874">Quinone</keyword>
<keyword id="KW-0677">Repeat</keyword>
<keyword id="KW-0793">Thylakoid</keyword>
<keyword id="KW-1278">Translocase</keyword>
<reference key="1">
    <citation type="journal article" date="2006" name="BMC Plant Biol.">
        <title>Rapid and accurate pyrosequencing of angiosperm plastid genomes.</title>
        <authorList>
            <person name="Moore M.J."/>
            <person name="Dhingra A."/>
            <person name="Soltis P.S."/>
            <person name="Shaw R."/>
            <person name="Farmerie W.G."/>
            <person name="Folta K.M."/>
            <person name="Soltis D.E."/>
        </authorList>
    </citation>
    <scope>NUCLEOTIDE SEQUENCE [LARGE SCALE GENOMIC DNA]</scope>
</reference>